<gene>
    <name type="primary">RC3H2</name>
    <name type="synonym">MNAB</name>
    <name type="synonym">RNF164</name>
</gene>
<accession>Q9HBD1</accession>
<accession>Q4VXB1</accession>
<accession>Q5JPD7</accession>
<accession>Q86ST6</accession>
<accession>Q8N3D6</accession>
<accession>Q96F27</accession>
<accession>Q9H5J2</accession>
<accession>Q9HBD2</accession>
<accession>Q9NWN9</accession>
<accession>Q9NXE1</accession>
<name>RC3H2_HUMAN</name>
<protein>
    <recommendedName>
        <fullName>Roquin-2</fullName>
        <ecNumber evidence="10">2.3.2.27</ecNumber>
    </recommendedName>
    <alternativeName>
        <fullName>Membrane-associated nucleic acid-binding protein</fullName>
    </alternativeName>
    <alternativeName>
        <fullName>RING finger and CCCH-type zinc finger domain-containing protein 2</fullName>
    </alternativeName>
    <alternativeName>
        <fullName>RING finger protein 164</fullName>
    </alternativeName>
    <alternativeName>
        <fullName evidence="17">RING-type E3 ubiquitin transferase Roquin-2</fullName>
    </alternativeName>
</protein>
<feature type="chain" id="PRO_0000055968" description="Roquin-2">
    <location>
        <begin position="1"/>
        <end position="1191"/>
    </location>
</feature>
<feature type="zinc finger region" description="RING-type; degenerate" evidence="4">
    <location>
        <begin position="14"/>
        <end position="54"/>
    </location>
</feature>
<feature type="zinc finger region" description="C3H1-type" evidence="5">
    <location>
        <begin position="410"/>
        <end position="438"/>
    </location>
</feature>
<feature type="region of interest" description="HEPN-N" evidence="11">
    <location>
        <begin position="91"/>
        <end position="170"/>
    </location>
</feature>
<feature type="region of interest" description="ROQ" evidence="10">
    <location>
        <begin position="171"/>
        <end position="325"/>
    </location>
</feature>
<feature type="region of interest" description="HEPN-C" evidence="11">
    <location>
        <begin position="326"/>
        <end position="396"/>
    </location>
</feature>
<feature type="region of interest" description="Disordered" evidence="6">
    <location>
        <begin position="528"/>
        <end position="576"/>
    </location>
</feature>
<feature type="region of interest" description="Disordered" evidence="6">
    <location>
        <begin position="644"/>
        <end position="680"/>
    </location>
</feature>
<feature type="compositionally biased region" description="Polar residues" evidence="6">
    <location>
        <begin position="530"/>
        <end position="546"/>
    </location>
</feature>
<feature type="compositionally biased region" description="Polar residues" evidence="6">
    <location>
        <begin position="554"/>
        <end position="576"/>
    </location>
</feature>
<feature type="binding site" evidence="3">
    <location>
        <position position="14"/>
    </location>
    <ligand>
        <name>Zn(2+)</name>
        <dbReference type="ChEBI" id="CHEBI:29105"/>
        <label>1</label>
    </ligand>
</feature>
<feature type="binding site" evidence="3">
    <location>
        <position position="17"/>
    </location>
    <ligand>
        <name>Zn(2+)</name>
        <dbReference type="ChEBI" id="CHEBI:29105"/>
        <label>1</label>
    </ligand>
</feature>
<feature type="binding site" evidence="3">
    <location>
        <position position="33"/>
    </location>
    <ligand>
        <name>Zn(2+)</name>
        <dbReference type="ChEBI" id="CHEBI:29105"/>
        <label>2</label>
    </ligand>
</feature>
<feature type="binding site" evidence="3">
    <location>
        <position position="35"/>
    </location>
    <ligand>
        <name>Zn(2+)</name>
        <dbReference type="ChEBI" id="CHEBI:29105"/>
        <label>2</label>
    </ligand>
</feature>
<feature type="binding site" evidence="3">
    <location>
        <position position="38"/>
    </location>
    <ligand>
        <name>Zn(2+)</name>
        <dbReference type="ChEBI" id="CHEBI:29105"/>
        <label>1</label>
    </ligand>
</feature>
<feature type="binding site" evidence="3">
    <location>
        <position position="50"/>
    </location>
    <ligand>
        <name>Zn(2+)</name>
        <dbReference type="ChEBI" id="CHEBI:29105"/>
        <label>2</label>
    </ligand>
</feature>
<feature type="binding site" evidence="3">
    <location>
        <position position="53"/>
    </location>
    <ligand>
        <name>Zn(2+)</name>
        <dbReference type="ChEBI" id="CHEBI:29105"/>
        <label>2</label>
    </ligand>
</feature>
<feature type="site" description="Cleavage; by MALT1" evidence="3">
    <location>
        <position position="509"/>
    </location>
</feature>
<feature type="site" description="Cleavage; by MALT1" evidence="3">
    <location>
        <position position="585"/>
    </location>
</feature>
<feature type="modified residue" description="Phosphoserine" evidence="22">
    <location>
        <position position="549"/>
    </location>
</feature>
<feature type="modified residue" description="Phosphoserine" evidence="23">
    <location>
        <position position="808"/>
    </location>
</feature>
<feature type="modified residue" description="Phosphoserine" evidence="24">
    <location>
        <position position="983"/>
    </location>
</feature>
<feature type="modified residue" description="Phosphoserine" evidence="24">
    <location>
        <position position="1119"/>
    </location>
</feature>
<feature type="splice variant" id="VSP_015017" description="In isoform 6." evidence="13">
    <location>
        <begin position="1"/>
        <end position="195"/>
    </location>
</feature>
<feature type="splice variant" id="VSP_015018" description="In isoform 5." evidence="14">
    <original>AMQEEALKLVLLALEDGSALSRKV</original>
    <variation>GKIGYYLTFFISYWGLRMPISGAR</variation>
    <location>
        <begin position="195"/>
        <end position="218"/>
    </location>
</feature>
<feature type="splice variant" id="VSP_015019" description="In isoform 5." evidence="14">
    <location>
        <begin position="219"/>
        <end position="1191"/>
    </location>
</feature>
<feature type="splice variant" id="VSP_015020" description="In isoform 3." evidence="14">
    <original>YRLRNKKINATVRTFPLLNKVGVNNTVTTTAGNVISVIGSTETTGKIVPSTNGISNAENSVSQL</original>
    <variation>CNPRGLYLHCCLLSSVASLGTVHNELYKQQHCDREKISVCAVKRAETCFSSQFFSPLEEPREED</variation>
    <location>
        <begin position="443"/>
        <end position="506"/>
    </location>
</feature>
<feature type="splice variant" id="VSP_015021" description="In isoform 2." evidence="15">
    <original>VRTFPLLNKVGVNNTVTTTAGNVIS</original>
    <variation>EVLKQQGKLFQVQTEFQMQKTVFPS</variation>
    <location>
        <begin position="454"/>
        <end position="478"/>
    </location>
</feature>
<feature type="splice variant" id="VSP_015022" description="In isoform 2." evidence="15">
    <location>
        <begin position="479"/>
        <end position="1191"/>
    </location>
</feature>
<feature type="splice variant" id="VSP_015023" description="In isoform 3." evidence="14">
    <location>
        <begin position="507"/>
        <end position="1191"/>
    </location>
</feature>
<feature type="splice variant" id="VSP_015024" description="In isoform 4 and isoform 6." evidence="13 15">
    <original>LQSDYTEDATDTKPDRDIELELSALDTDEPDGQSEPIEEILDIQLGISSQNDQLLNGMAVENGHPVQQHQKEPPKQKKQSLGEDHVILEEQKTILPVTSCFSQPLPVSISNASCLPITTSVSAGNLILKTHVMSEDKNDFLKPVANGKMVNS</original>
    <variation>VKKLNLSASCLMYLFSAAASWLYHY</variation>
    <location>
        <begin position="1040"/>
        <end position="1191"/>
    </location>
</feature>
<feature type="mutagenesis site" description="Loss of activity. Loss of MAP3K5 ubiquitination." evidence="9">
    <original>C</original>
    <variation>S</variation>
    <location>
        <position position="33"/>
    </location>
</feature>
<feature type="mutagenesis site" description="Abolishes binding to CDE RNA but not dsRNA." evidence="11">
    <original>QLLYR</original>
    <variation>ALLAA</variation>
    <location>
        <begin position="244"/>
        <end position="248"/>
    </location>
</feature>
<feature type="mutagenesis site" description="Decreases dsRNA-binding." evidence="11">
    <original>S</original>
    <variation>E</variation>
    <location>
        <position position="323"/>
    </location>
</feature>
<feature type="sequence conflict" description="In Ref. 2; BAA91073." evidence="17" ref="2">
    <original>A</original>
    <variation>G</variation>
    <location>
        <position position="650"/>
    </location>
</feature>
<feature type="helix" evidence="25">
    <location>
        <begin position="93"/>
        <end position="106"/>
    </location>
</feature>
<feature type="helix" evidence="25">
    <location>
        <begin position="107"/>
        <end position="109"/>
    </location>
</feature>
<feature type="helix" evidence="25">
    <location>
        <begin position="128"/>
        <end position="138"/>
    </location>
</feature>
<feature type="helix" evidence="25">
    <location>
        <begin position="145"/>
        <end position="169"/>
    </location>
</feature>
<feature type="helix" evidence="26">
    <location>
        <begin position="173"/>
        <end position="186"/>
    </location>
</feature>
<feature type="helix" evidence="26">
    <location>
        <begin position="194"/>
        <end position="208"/>
    </location>
</feature>
<feature type="helix" evidence="26">
    <location>
        <begin position="216"/>
        <end position="227"/>
    </location>
</feature>
<feature type="turn" evidence="26">
    <location>
        <begin position="228"/>
        <end position="230"/>
    </location>
</feature>
<feature type="helix" evidence="26">
    <location>
        <begin position="236"/>
        <end position="248"/>
    </location>
</feature>
<feature type="strand" evidence="26">
    <location>
        <begin position="252"/>
        <end position="257"/>
    </location>
</feature>
<feature type="strand" evidence="26">
    <location>
        <begin position="260"/>
        <end position="266"/>
    </location>
</feature>
<feature type="helix" evidence="26">
    <location>
        <begin position="268"/>
        <end position="270"/>
    </location>
</feature>
<feature type="helix" evidence="26">
    <location>
        <begin position="273"/>
        <end position="290"/>
    </location>
</feature>
<feature type="helix" evidence="26">
    <location>
        <begin position="297"/>
        <end position="305"/>
    </location>
</feature>
<feature type="strand" evidence="26">
    <location>
        <begin position="306"/>
        <end position="308"/>
    </location>
</feature>
<feature type="helix" evidence="26">
    <location>
        <begin position="311"/>
        <end position="320"/>
    </location>
</feature>
<feature type="helix" evidence="25">
    <location>
        <begin position="326"/>
        <end position="341"/>
    </location>
</feature>
<feature type="helix" evidence="25">
    <location>
        <begin position="347"/>
        <end position="350"/>
    </location>
</feature>
<feature type="helix" evidence="25">
    <location>
        <begin position="351"/>
        <end position="358"/>
    </location>
</feature>
<feature type="helix" evidence="25">
    <location>
        <begin position="371"/>
        <end position="394"/>
    </location>
</feature>
<proteinExistence type="evidence at protein level"/>
<evidence type="ECO:0000250" key="1"/>
<evidence type="ECO:0000250" key="2">
    <source>
        <dbReference type="UniProtKB" id="P0C090"/>
    </source>
</evidence>
<evidence type="ECO:0000250" key="3">
    <source>
        <dbReference type="UniProtKB" id="Q4VGL6"/>
    </source>
</evidence>
<evidence type="ECO:0000255" key="4">
    <source>
        <dbReference type="PROSITE-ProRule" id="PRU00175"/>
    </source>
</evidence>
<evidence type="ECO:0000255" key="5">
    <source>
        <dbReference type="PROSITE-ProRule" id="PRU00723"/>
    </source>
</evidence>
<evidence type="ECO:0000256" key="6">
    <source>
        <dbReference type="SAM" id="MobiDB-lite"/>
    </source>
</evidence>
<evidence type="ECO:0000269" key="7">
    <source>
    </source>
</evidence>
<evidence type="ECO:0000269" key="8">
    <source>
    </source>
</evidence>
<evidence type="ECO:0000269" key="9">
    <source>
    </source>
</evidence>
<evidence type="ECO:0000269" key="10">
    <source>
    </source>
</evidence>
<evidence type="ECO:0000269" key="11">
    <source>
    </source>
</evidence>
<evidence type="ECO:0000269" key="12">
    <source>
    </source>
</evidence>
<evidence type="ECO:0000303" key="13">
    <source>
    </source>
</evidence>
<evidence type="ECO:0000303" key="14">
    <source>
    </source>
</evidence>
<evidence type="ECO:0000303" key="15">
    <source>
    </source>
</evidence>
<evidence type="ECO:0000303" key="16">
    <source>
    </source>
</evidence>
<evidence type="ECO:0000305" key="17"/>
<evidence type="ECO:0007744" key="18">
    <source>
        <dbReference type="PDB" id="4Z30"/>
    </source>
</evidence>
<evidence type="ECO:0007744" key="19">
    <source>
        <dbReference type="PDB" id="4Z31"/>
    </source>
</evidence>
<evidence type="ECO:0007744" key="20">
    <source>
        <dbReference type="PDB" id="4ZLC"/>
    </source>
</evidence>
<evidence type="ECO:0007744" key="21">
    <source>
        <dbReference type="PDB" id="4ZLD"/>
    </source>
</evidence>
<evidence type="ECO:0007744" key="22">
    <source>
    </source>
</evidence>
<evidence type="ECO:0007744" key="23">
    <source>
    </source>
</evidence>
<evidence type="ECO:0007744" key="24">
    <source>
    </source>
</evidence>
<evidence type="ECO:0007829" key="25">
    <source>
        <dbReference type="PDB" id="4Z31"/>
    </source>
</evidence>
<evidence type="ECO:0007829" key="26">
    <source>
        <dbReference type="PDB" id="4ZLD"/>
    </source>
</evidence>
<dbReference type="EC" id="2.3.2.27" evidence="10"/>
<dbReference type="EMBL" id="AF255303">
    <property type="protein sequence ID" value="AAG00432.1"/>
    <property type="molecule type" value="mRNA"/>
</dbReference>
<dbReference type="EMBL" id="AF255304">
    <property type="protein sequence ID" value="AAG00433.1"/>
    <property type="molecule type" value="mRNA"/>
</dbReference>
<dbReference type="EMBL" id="AK000308">
    <property type="protein sequence ID" value="BAA91073.1"/>
    <property type="molecule type" value="mRNA"/>
</dbReference>
<dbReference type="EMBL" id="AK000720">
    <property type="protein sequence ID" value="BAA91340.1"/>
    <property type="status" value="ALT_INIT"/>
    <property type="molecule type" value="mRNA"/>
</dbReference>
<dbReference type="EMBL" id="AK027042">
    <property type="protein sequence ID" value="BAB15634.1"/>
    <property type="status" value="ALT_INIT"/>
    <property type="molecule type" value="mRNA"/>
</dbReference>
<dbReference type="EMBL" id="AL833177">
    <property type="protein sequence ID" value="CAI46182.1"/>
    <property type="molecule type" value="mRNA"/>
</dbReference>
<dbReference type="EMBL" id="AL834431">
    <property type="protein sequence ID" value="CAD39091.1"/>
    <property type="molecule type" value="mRNA"/>
</dbReference>
<dbReference type="EMBL" id="AC007066">
    <property type="status" value="NOT_ANNOTATED_CDS"/>
    <property type="molecule type" value="Genomic_DNA"/>
</dbReference>
<dbReference type="EMBL" id="AL359512">
    <property type="status" value="NOT_ANNOTATED_CDS"/>
    <property type="molecule type" value="Genomic_DNA"/>
</dbReference>
<dbReference type="EMBL" id="CH471090">
    <property type="protein sequence ID" value="EAW87547.1"/>
    <property type="molecule type" value="Genomic_DNA"/>
</dbReference>
<dbReference type="EMBL" id="BC011688">
    <property type="protein sequence ID" value="AAH11688.2"/>
    <property type="molecule type" value="mRNA"/>
</dbReference>
<dbReference type="EMBL" id="BC044642">
    <property type="protein sequence ID" value="AAH44642.1"/>
    <property type="molecule type" value="mRNA"/>
</dbReference>
<dbReference type="CCDS" id="CCDS43874.1">
    <molecule id="Q9HBD1-1"/>
</dbReference>
<dbReference type="CCDS" id="CCDS48014.1">
    <molecule id="Q9HBD1-4"/>
</dbReference>
<dbReference type="CCDS" id="CCDS87685.1">
    <molecule id="Q9HBD1-3"/>
</dbReference>
<dbReference type="RefSeq" id="NP_001094058.1">
    <molecule id="Q9HBD1-1"/>
    <property type="nucleotide sequence ID" value="NM_001100588.3"/>
</dbReference>
<dbReference type="RefSeq" id="NP_061323.2">
    <molecule id="Q9HBD1-4"/>
    <property type="nucleotide sequence ID" value="NM_018835.5"/>
</dbReference>
<dbReference type="PDB" id="4Z30">
    <property type="method" value="X-ray"/>
    <property type="resolution" value="2.71 A"/>
    <property type="chains" value="A=86-404"/>
</dbReference>
<dbReference type="PDB" id="4Z31">
    <property type="method" value="X-ray"/>
    <property type="resolution" value="2.50 A"/>
    <property type="chains" value="A/B=87-404"/>
</dbReference>
<dbReference type="PDB" id="4ZLC">
    <property type="method" value="X-ray"/>
    <property type="resolution" value="2.70 A"/>
    <property type="chains" value="A/B/C/D=171-325"/>
</dbReference>
<dbReference type="PDB" id="4ZLD">
    <property type="method" value="X-ray"/>
    <property type="resolution" value="1.60 A"/>
    <property type="chains" value="A=171-325"/>
</dbReference>
<dbReference type="PDBsum" id="4Z30"/>
<dbReference type="PDBsum" id="4Z31"/>
<dbReference type="PDBsum" id="4ZLC"/>
<dbReference type="PDBsum" id="4ZLD"/>
<dbReference type="SMR" id="Q9HBD1"/>
<dbReference type="BioGRID" id="120029">
    <property type="interactions" value="673"/>
</dbReference>
<dbReference type="FunCoup" id="Q9HBD1">
    <property type="interactions" value="3048"/>
</dbReference>
<dbReference type="IntAct" id="Q9HBD1">
    <property type="interactions" value="27"/>
</dbReference>
<dbReference type="MINT" id="Q9HBD1"/>
<dbReference type="STRING" id="9606.ENSP00000362774"/>
<dbReference type="GlyCosmos" id="Q9HBD1">
    <property type="glycosylation" value="7 sites, 1 glycan"/>
</dbReference>
<dbReference type="GlyGen" id="Q9HBD1">
    <property type="glycosylation" value="26 sites, 1 O-linked glycan (24 sites)"/>
</dbReference>
<dbReference type="iPTMnet" id="Q9HBD1"/>
<dbReference type="PhosphoSitePlus" id="Q9HBD1"/>
<dbReference type="BioMuta" id="RC3H2"/>
<dbReference type="DMDM" id="73621223"/>
<dbReference type="jPOST" id="Q9HBD1"/>
<dbReference type="MassIVE" id="Q9HBD1"/>
<dbReference type="PaxDb" id="9606-ENSP00000362774"/>
<dbReference type="PeptideAtlas" id="Q9HBD1"/>
<dbReference type="ProteomicsDB" id="81522">
    <molecule id="Q9HBD1-1"/>
</dbReference>
<dbReference type="ProteomicsDB" id="81523">
    <molecule id="Q9HBD1-2"/>
</dbReference>
<dbReference type="ProteomicsDB" id="81524">
    <molecule id="Q9HBD1-3"/>
</dbReference>
<dbReference type="ProteomicsDB" id="81525">
    <molecule id="Q9HBD1-4"/>
</dbReference>
<dbReference type="ProteomicsDB" id="81526">
    <molecule id="Q9HBD1-5"/>
</dbReference>
<dbReference type="ProteomicsDB" id="81527">
    <molecule id="Q9HBD1-6"/>
</dbReference>
<dbReference type="Pumba" id="Q9HBD1"/>
<dbReference type="TopDownProteomics" id="Q9HBD1-3">
    <molecule id="Q9HBD1-3"/>
</dbReference>
<dbReference type="Antibodypedia" id="30358">
    <property type="antibodies" value="59 antibodies from 14 providers"/>
</dbReference>
<dbReference type="DNASU" id="54542"/>
<dbReference type="Ensembl" id="ENST00000357244.7">
    <molecule id="Q9HBD1-1"/>
    <property type="protein sequence ID" value="ENSP00000349783.2"/>
    <property type="gene ID" value="ENSG00000056586.16"/>
</dbReference>
<dbReference type="Ensembl" id="ENST00000373670.5">
    <molecule id="Q9HBD1-1"/>
    <property type="protein sequence ID" value="ENSP00000362774.1"/>
    <property type="gene ID" value="ENSG00000056586.16"/>
</dbReference>
<dbReference type="Ensembl" id="ENST00000423239.6">
    <molecule id="Q9HBD1-4"/>
    <property type="protein sequence ID" value="ENSP00000411767.1"/>
    <property type="gene ID" value="ENSG00000056586.16"/>
</dbReference>
<dbReference type="Ensembl" id="ENST00000471874.2">
    <molecule id="Q9HBD1-5"/>
    <property type="protein sequence ID" value="ENSP00000474148.1"/>
    <property type="gene ID" value="ENSG00000056586.16"/>
</dbReference>
<dbReference type="Ensembl" id="ENST00000498479.5">
    <molecule id="Q9HBD1-2"/>
    <property type="protein sequence ID" value="ENSP00000474709.1"/>
    <property type="gene ID" value="ENSG00000056586.16"/>
</dbReference>
<dbReference type="GeneID" id="54542"/>
<dbReference type="KEGG" id="hsa:54542"/>
<dbReference type="MANE-Select" id="ENST00000357244.7">
    <property type="protein sequence ID" value="ENSP00000349783.2"/>
    <property type="RefSeq nucleotide sequence ID" value="NM_001100588.3"/>
    <property type="RefSeq protein sequence ID" value="NP_001094058.1"/>
</dbReference>
<dbReference type="UCSC" id="uc004bnb.2">
    <molecule id="Q9HBD1-1"/>
    <property type="organism name" value="human"/>
</dbReference>
<dbReference type="AGR" id="HGNC:21461"/>
<dbReference type="CTD" id="54542"/>
<dbReference type="DisGeNET" id="54542"/>
<dbReference type="GeneCards" id="RC3H2"/>
<dbReference type="HGNC" id="HGNC:21461">
    <property type="gene designation" value="RC3H2"/>
</dbReference>
<dbReference type="HPA" id="ENSG00000056586">
    <property type="expression patterns" value="Low tissue specificity"/>
</dbReference>
<dbReference type="MIM" id="615231">
    <property type="type" value="gene"/>
</dbReference>
<dbReference type="neXtProt" id="NX_Q9HBD1"/>
<dbReference type="OpenTargets" id="ENSG00000056586"/>
<dbReference type="PharmGKB" id="PA162400905"/>
<dbReference type="VEuPathDB" id="HostDB:ENSG00000056586"/>
<dbReference type="eggNOG" id="KOG3161">
    <property type="taxonomic scope" value="Eukaryota"/>
</dbReference>
<dbReference type="GeneTree" id="ENSGT00940000157685"/>
<dbReference type="HOGENOM" id="CLU_011007_0_0_1"/>
<dbReference type="InParanoid" id="Q9HBD1"/>
<dbReference type="OMA" id="GTEHVEN"/>
<dbReference type="OrthoDB" id="10067217at2759"/>
<dbReference type="PAN-GO" id="Q9HBD1">
    <property type="GO annotations" value="8 GO annotations based on evolutionary models"/>
</dbReference>
<dbReference type="PhylomeDB" id="Q9HBD1"/>
<dbReference type="TreeFam" id="TF317698"/>
<dbReference type="PathwayCommons" id="Q9HBD1"/>
<dbReference type="SignaLink" id="Q9HBD1"/>
<dbReference type="SIGNOR" id="Q9HBD1"/>
<dbReference type="UniPathway" id="UPA00143"/>
<dbReference type="BioGRID-ORCS" id="54542">
    <property type="hits" value="14 hits in 1199 CRISPR screens"/>
</dbReference>
<dbReference type="CD-CODE" id="232F8A39">
    <property type="entry name" value="P-body"/>
</dbReference>
<dbReference type="CD-CODE" id="DEE660B4">
    <property type="entry name" value="Stress granule"/>
</dbReference>
<dbReference type="ChiTaRS" id="RC3H2">
    <property type="organism name" value="human"/>
</dbReference>
<dbReference type="EvolutionaryTrace" id="Q9HBD1"/>
<dbReference type="GenomeRNAi" id="54542"/>
<dbReference type="Pharos" id="Q9HBD1">
    <property type="development level" value="Tbio"/>
</dbReference>
<dbReference type="PRO" id="PR:Q9HBD1"/>
<dbReference type="Proteomes" id="UP000005640">
    <property type="component" value="Chromosome 9"/>
</dbReference>
<dbReference type="RNAct" id="Q9HBD1">
    <property type="molecule type" value="protein"/>
</dbReference>
<dbReference type="Bgee" id="ENSG00000056586">
    <property type="expression patterns" value="Expressed in cerebellar vermis and 205 other cell types or tissues"/>
</dbReference>
<dbReference type="ExpressionAtlas" id="Q9HBD1">
    <property type="expression patterns" value="baseline and differential"/>
</dbReference>
<dbReference type="GO" id="GO:0009986">
    <property type="term" value="C:cell surface"/>
    <property type="evidence" value="ECO:0000314"/>
    <property type="project" value="UniProtKB"/>
</dbReference>
<dbReference type="GO" id="GO:0010494">
    <property type="term" value="C:cytoplasmic stress granule"/>
    <property type="evidence" value="ECO:0000318"/>
    <property type="project" value="GO_Central"/>
</dbReference>
<dbReference type="GO" id="GO:0043231">
    <property type="term" value="C:intracellular membrane-bounded organelle"/>
    <property type="evidence" value="ECO:0000314"/>
    <property type="project" value="HPA"/>
</dbReference>
<dbReference type="GO" id="GO:0016020">
    <property type="term" value="C:membrane"/>
    <property type="evidence" value="ECO:0000314"/>
    <property type="project" value="UniProtKB"/>
</dbReference>
<dbReference type="GO" id="GO:0000932">
    <property type="term" value="C:P-body"/>
    <property type="evidence" value="ECO:0007669"/>
    <property type="project" value="UniProtKB-SubCell"/>
</dbReference>
<dbReference type="GO" id="GO:0003677">
    <property type="term" value="F:DNA binding"/>
    <property type="evidence" value="ECO:0000314"/>
    <property type="project" value="UniProtKB"/>
</dbReference>
<dbReference type="GO" id="GO:0003725">
    <property type="term" value="F:double-stranded RNA binding"/>
    <property type="evidence" value="ECO:0000314"/>
    <property type="project" value="UniProtKB"/>
</dbReference>
<dbReference type="GO" id="GO:0003729">
    <property type="term" value="F:mRNA binding"/>
    <property type="evidence" value="ECO:0000318"/>
    <property type="project" value="GO_Central"/>
</dbReference>
<dbReference type="GO" id="GO:0003723">
    <property type="term" value="F:RNA binding"/>
    <property type="evidence" value="ECO:0007005"/>
    <property type="project" value="UniProtKB"/>
</dbReference>
<dbReference type="GO" id="GO:0035613">
    <property type="term" value="F:RNA stem-loop binding"/>
    <property type="evidence" value="ECO:0000314"/>
    <property type="project" value="UniProtKB"/>
</dbReference>
<dbReference type="GO" id="GO:0061630">
    <property type="term" value="F:ubiquitin protein ligase activity"/>
    <property type="evidence" value="ECO:0000314"/>
    <property type="project" value="UniProtKB"/>
</dbReference>
<dbReference type="GO" id="GO:0008270">
    <property type="term" value="F:zinc ion binding"/>
    <property type="evidence" value="ECO:0007669"/>
    <property type="project" value="UniProtKB-KW"/>
</dbReference>
<dbReference type="GO" id="GO:0001782">
    <property type="term" value="P:B cell homeostasis"/>
    <property type="evidence" value="ECO:0007669"/>
    <property type="project" value="Ensembl"/>
</dbReference>
<dbReference type="GO" id="GO:0060173">
    <property type="term" value="P:limb development"/>
    <property type="evidence" value="ECO:0007669"/>
    <property type="project" value="Ensembl"/>
</dbReference>
<dbReference type="GO" id="GO:0048286">
    <property type="term" value="P:lung alveolus development"/>
    <property type="evidence" value="ECO:0007669"/>
    <property type="project" value="Ensembl"/>
</dbReference>
<dbReference type="GO" id="GO:0048535">
    <property type="term" value="P:lymph node development"/>
    <property type="evidence" value="ECO:0007669"/>
    <property type="project" value="Ensembl"/>
</dbReference>
<dbReference type="GO" id="GO:0035264">
    <property type="term" value="P:multicellular organism growth"/>
    <property type="evidence" value="ECO:0007669"/>
    <property type="project" value="Ensembl"/>
</dbReference>
<dbReference type="GO" id="GO:2000320">
    <property type="term" value="P:negative regulation of T-helper 17 cell differentiation"/>
    <property type="evidence" value="ECO:0000250"/>
    <property type="project" value="UniProtKB"/>
</dbReference>
<dbReference type="GO" id="GO:0000288">
    <property type="term" value="P:nuclear-transcribed mRNA catabolic process, deadenylation-dependent decay"/>
    <property type="evidence" value="ECO:0000318"/>
    <property type="project" value="GO_Central"/>
</dbReference>
<dbReference type="GO" id="GO:1901224">
    <property type="term" value="P:positive regulation of non-canonical NF-kappaB signal transduction"/>
    <property type="evidence" value="ECO:0007669"/>
    <property type="project" value="Ensembl"/>
</dbReference>
<dbReference type="GO" id="GO:0009791">
    <property type="term" value="P:post-embryonic development"/>
    <property type="evidence" value="ECO:0007669"/>
    <property type="project" value="Ensembl"/>
</dbReference>
<dbReference type="GO" id="GO:0000209">
    <property type="term" value="P:protein polyubiquitination"/>
    <property type="evidence" value="ECO:0000314"/>
    <property type="project" value="UniProtKB"/>
</dbReference>
<dbReference type="GO" id="GO:2000628">
    <property type="term" value="P:regulation of miRNA metabolic process"/>
    <property type="evidence" value="ECO:0000250"/>
    <property type="project" value="UniProtKB"/>
</dbReference>
<dbReference type="GO" id="GO:0048536">
    <property type="term" value="P:spleen development"/>
    <property type="evidence" value="ECO:0007669"/>
    <property type="project" value="Ensembl"/>
</dbReference>
<dbReference type="GO" id="GO:0043029">
    <property type="term" value="P:T cell homeostasis"/>
    <property type="evidence" value="ECO:0007669"/>
    <property type="project" value="Ensembl"/>
</dbReference>
<dbReference type="GO" id="GO:0042098">
    <property type="term" value="P:T cell proliferation"/>
    <property type="evidence" value="ECO:0007669"/>
    <property type="project" value="Ensembl"/>
</dbReference>
<dbReference type="GO" id="GO:0050852">
    <property type="term" value="P:T cell receptor signaling pathway"/>
    <property type="evidence" value="ECO:0000250"/>
    <property type="project" value="UniProtKB"/>
</dbReference>
<dbReference type="GO" id="GO:0061470">
    <property type="term" value="P:T follicular helper cell differentiation"/>
    <property type="evidence" value="ECO:0007669"/>
    <property type="project" value="Ensembl"/>
</dbReference>
<dbReference type="GO" id="GO:0006511">
    <property type="term" value="P:ubiquitin-dependent protein catabolic process"/>
    <property type="evidence" value="ECO:0000318"/>
    <property type="project" value="GO_Central"/>
</dbReference>
<dbReference type="CDD" id="cd16782">
    <property type="entry name" value="mRING-HC-C3HC3D_Roquin2"/>
    <property type="match status" value="1"/>
</dbReference>
<dbReference type="FunFam" id="1.20.120.1790:FF:000001">
    <property type="entry name" value="roquin-1 isoform X1"/>
    <property type="match status" value="1"/>
</dbReference>
<dbReference type="FunFam" id="4.10.1000.10:FF:000004">
    <property type="entry name" value="roquin-1 isoform X2"/>
    <property type="match status" value="1"/>
</dbReference>
<dbReference type="FunFam" id="3.30.40.10:FF:000047">
    <property type="entry name" value="Roquin-2 isoform 1"/>
    <property type="match status" value="1"/>
</dbReference>
<dbReference type="Gene3D" id="1.20.120.1790">
    <property type="match status" value="1"/>
</dbReference>
<dbReference type="Gene3D" id="4.10.1000.10">
    <property type="entry name" value="Zinc finger, CCCH-type"/>
    <property type="match status" value="1"/>
</dbReference>
<dbReference type="Gene3D" id="3.30.40.10">
    <property type="entry name" value="Zinc/RING finger domain, C3HC4 (zinc finger)"/>
    <property type="match status" value="1"/>
</dbReference>
<dbReference type="InterPro" id="IPR041523">
    <property type="entry name" value="ROQ_II"/>
</dbReference>
<dbReference type="InterPro" id="IPR048575">
    <property type="entry name" value="Roquin_1_2-like_ROQ"/>
</dbReference>
<dbReference type="InterPro" id="IPR052249">
    <property type="entry name" value="Roquin_domain"/>
</dbReference>
<dbReference type="InterPro" id="IPR000571">
    <property type="entry name" value="Znf_CCCH"/>
</dbReference>
<dbReference type="InterPro" id="IPR036855">
    <property type="entry name" value="Znf_CCCH_sf"/>
</dbReference>
<dbReference type="InterPro" id="IPR001841">
    <property type="entry name" value="Znf_RING"/>
</dbReference>
<dbReference type="InterPro" id="IPR013083">
    <property type="entry name" value="Znf_RING/FYVE/PHD"/>
</dbReference>
<dbReference type="InterPro" id="IPR017907">
    <property type="entry name" value="Znf_RING_CS"/>
</dbReference>
<dbReference type="PANTHER" id="PTHR13139">
    <property type="entry name" value="RING FINGER AND CCCH-TYPE ZINC FINGER DOMAIN-CONTAINING PROTEIN"/>
    <property type="match status" value="1"/>
</dbReference>
<dbReference type="PANTHER" id="PTHR13139:SF2">
    <property type="entry name" value="ROQUIN-2"/>
    <property type="match status" value="1"/>
</dbReference>
<dbReference type="Pfam" id="PF18386">
    <property type="entry name" value="ROQ_II"/>
    <property type="match status" value="1"/>
</dbReference>
<dbReference type="Pfam" id="PF21206">
    <property type="entry name" value="Roquin_1_2-like_ROQ"/>
    <property type="match status" value="1"/>
</dbReference>
<dbReference type="Pfam" id="PF00642">
    <property type="entry name" value="zf-CCCH"/>
    <property type="match status" value="1"/>
</dbReference>
<dbReference type="Pfam" id="PF14634">
    <property type="entry name" value="zf-RING_5"/>
    <property type="match status" value="1"/>
</dbReference>
<dbReference type="SMART" id="SM00184">
    <property type="entry name" value="RING"/>
    <property type="match status" value="1"/>
</dbReference>
<dbReference type="SMART" id="SM00356">
    <property type="entry name" value="ZnF_C3H1"/>
    <property type="match status" value="1"/>
</dbReference>
<dbReference type="SUPFAM" id="SSF90229">
    <property type="entry name" value="CCCH zinc finger"/>
    <property type="match status" value="1"/>
</dbReference>
<dbReference type="SUPFAM" id="SSF57850">
    <property type="entry name" value="RING/U-box"/>
    <property type="match status" value="1"/>
</dbReference>
<dbReference type="PROSITE" id="PS50103">
    <property type="entry name" value="ZF_C3H1"/>
    <property type="match status" value="1"/>
</dbReference>
<dbReference type="PROSITE" id="PS00518">
    <property type="entry name" value="ZF_RING_1"/>
    <property type="match status" value="1"/>
</dbReference>
<dbReference type="PROSITE" id="PS50089">
    <property type="entry name" value="ZF_RING_2"/>
    <property type="match status" value="1"/>
</dbReference>
<reference key="1">
    <citation type="journal article" date="2000" name="J. Biol. Chem.">
        <title>A human gene coding for a membrane-associated nucleic acid-binding protein.</title>
        <authorList>
            <person name="Siess D.C."/>
            <person name="Vedder C.T."/>
            <person name="Merkens L.S."/>
            <person name="Tanaka T."/>
            <person name="Freed A.C."/>
            <person name="McCoy S.L."/>
            <person name="Heinrich M.C."/>
            <person name="Deffebach M.E."/>
            <person name="Bennett R.M."/>
            <person name="Hefeneider S.H."/>
        </authorList>
    </citation>
    <scope>NUCLEOTIDE SEQUENCE [MRNA] (ISOFORM 1)</scope>
    <scope>NUCLEIC ACID-BINDING</scope>
    <scope>TISSUE SPECIFICITY</scope>
    <source>
        <tissue>Monocyte</tissue>
    </source>
</reference>
<reference key="2">
    <citation type="journal article" date="2004" name="Nat. Genet.">
        <title>Complete sequencing and characterization of 21,243 full-length human cDNAs.</title>
        <authorList>
            <person name="Ota T."/>
            <person name="Suzuki Y."/>
            <person name="Nishikawa T."/>
            <person name="Otsuki T."/>
            <person name="Sugiyama T."/>
            <person name="Irie R."/>
            <person name="Wakamatsu A."/>
            <person name="Hayashi K."/>
            <person name="Sato H."/>
            <person name="Nagai K."/>
            <person name="Kimura K."/>
            <person name="Makita H."/>
            <person name="Sekine M."/>
            <person name="Obayashi M."/>
            <person name="Nishi T."/>
            <person name="Shibahara T."/>
            <person name="Tanaka T."/>
            <person name="Ishii S."/>
            <person name="Yamamoto J."/>
            <person name="Saito K."/>
            <person name="Kawai Y."/>
            <person name="Isono Y."/>
            <person name="Nakamura Y."/>
            <person name="Nagahari K."/>
            <person name="Murakami K."/>
            <person name="Yasuda T."/>
            <person name="Iwayanagi T."/>
            <person name="Wagatsuma M."/>
            <person name="Shiratori A."/>
            <person name="Sudo H."/>
            <person name="Hosoiri T."/>
            <person name="Kaku Y."/>
            <person name="Kodaira H."/>
            <person name="Kondo H."/>
            <person name="Sugawara M."/>
            <person name="Takahashi M."/>
            <person name="Kanda K."/>
            <person name="Yokoi T."/>
            <person name="Furuya T."/>
            <person name="Kikkawa E."/>
            <person name="Omura Y."/>
            <person name="Abe K."/>
            <person name="Kamihara K."/>
            <person name="Katsuta N."/>
            <person name="Sato K."/>
            <person name="Tanikawa M."/>
            <person name="Yamazaki M."/>
            <person name="Ninomiya K."/>
            <person name="Ishibashi T."/>
            <person name="Yamashita H."/>
            <person name="Murakawa K."/>
            <person name="Fujimori K."/>
            <person name="Tanai H."/>
            <person name="Kimata M."/>
            <person name="Watanabe M."/>
            <person name="Hiraoka S."/>
            <person name="Chiba Y."/>
            <person name="Ishida S."/>
            <person name="Ono Y."/>
            <person name="Takiguchi S."/>
            <person name="Watanabe S."/>
            <person name="Yosida M."/>
            <person name="Hotuta T."/>
            <person name="Kusano J."/>
            <person name="Kanehori K."/>
            <person name="Takahashi-Fujii A."/>
            <person name="Hara H."/>
            <person name="Tanase T.-O."/>
            <person name="Nomura Y."/>
            <person name="Togiya S."/>
            <person name="Komai F."/>
            <person name="Hara R."/>
            <person name="Takeuchi K."/>
            <person name="Arita M."/>
            <person name="Imose N."/>
            <person name="Musashino K."/>
            <person name="Yuuki H."/>
            <person name="Oshima A."/>
            <person name="Sasaki N."/>
            <person name="Aotsuka S."/>
            <person name="Yoshikawa Y."/>
            <person name="Matsunawa H."/>
            <person name="Ichihara T."/>
            <person name="Shiohata N."/>
            <person name="Sano S."/>
            <person name="Moriya S."/>
            <person name="Momiyama H."/>
            <person name="Satoh N."/>
            <person name="Takami S."/>
            <person name="Terashima Y."/>
            <person name="Suzuki O."/>
            <person name="Nakagawa S."/>
            <person name="Senoh A."/>
            <person name="Mizoguchi H."/>
            <person name="Goto Y."/>
            <person name="Shimizu F."/>
            <person name="Wakebe H."/>
            <person name="Hishigaki H."/>
            <person name="Watanabe T."/>
            <person name="Sugiyama A."/>
            <person name="Takemoto M."/>
            <person name="Kawakami B."/>
            <person name="Yamazaki M."/>
            <person name="Watanabe K."/>
            <person name="Kumagai A."/>
            <person name="Itakura S."/>
            <person name="Fukuzumi Y."/>
            <person name="Fujimori Y."/>
            <person name="Komiyama M."/>
            <person name="Tashiro H."/>
            <person name="Tanigami A."/>
            <person name="Fujiwara T."/>
            <person name="Ono T."/>
            <person name="Yamada K."/>
            <person name="Fujii Y."/>
            <person name="Ozaki K."/>
            <person name="Hirao M."/>
            <person name="Ohmori Y."/>
            <person name="Kawabata A."/>
            <person name="Hikiji T."/>
            <person name="Kobatake N."/>
            <person name="Inagaki H."/>
            <person name="Ikema Y."/>
            <person name="Okamoto S."/>
            <person name="Okitani R."/>
            <person name="Kawakami T."/>
            <person name="Noguchi S."/>
            <person name="Itoh T."/>
            <person name="Shigeta K."/>
            <person name="Senba T."/>
            <person name="Matsumura K."/>
            <person name="Nakajima Y."/>
            <person name="Mizuno T."/>
            <person name="Morinaga M."/>
            <person name="Sasaki M."/>
            <person name="Togashi T."/>
            <person name="Oyama M."/>
            <person name="Hata H."/>
            <person name="Watanabe M."/>
            <person name="Komatsu T."/>
            <person name="Mizushima-Sugano J."/>
            <person name="Satoh T."/>
            <person name="Shirai Y."/>
            <person name="Takahashi Y."/>
            <person name="Nakagawa K."/>
            <person name="Okumura K."/>
            <person name="Nagase T."/>
            <person name="Nomura N."/>
            <person name="Kikuchi H."/>
            <person name="Masuho Y."/>
            <person name="Yamashita R."/>
            <person name="Nakai K."/>
            <person name="Yada T."/>
            <person name="Nakamura Y."/>
            <person name="Ohara O."/>
            <person name="Isogai T."/>
            <person name="Sugano S."/>
        </authorList>
    </citation>
    <scope>NUCLEOTIDE SEQUENCE [LARGE SCALE MRNA] (ISOFORM 6)</scope>
    <scope>NUCLEOTIDE SEQUENCE [LARGE SCALE MRNA] OF 509-1191</scope>
    <source>
        <tissue>Hepatoma</tissue>
    </source>
</reference>
<reference key="3">
    <citation type="journal article" date="2007" name="BMC Genomics">
        <title>The full-ORF clone resource of the German cDNA consortium.</title>
        <authorList>
            <person name="Bechtel S."/>
            <person name="Rosenfelder H."/>
            <person name="Duda A."/>
            <person name="Schmidt C.P."/>
            <person name="Ernst U."/>
            <person name="Wellenreuther R."/>
            <person name="Mehrle A."/>
            <person name="Schuster C."/>
            <person name="Bahr A."/>
            <person name="Bloecker H."/>
            <person name="Heubner D."/>
            <person name="Hoerlein A."/>
            <person name="Michel G."/>
            <person name="Wedler H."/>
            <person name="Koehrer K."/>
            <person name="Ottenwaelder B."/>
            <person name="Poustka A."/>
            <person name="Wiemann S."/>
            <person name="Schupp I."/>
        </authorList>
    </citation>
    <scope>NUCLEOTIDE SEQUENCE [LARGE SCALE MRNA] (ISOFORM 2)</scope>
    <scope>NUCLEOTIDE SEQUENCE [LARGE SCALE MRNA] OF 337-1191 (ISOFORM 4)</scope>
    <source>
        <tissue>Lymph node</tissue>
        <tissue>Melanoma</tissue>
    </source>
</reference>
<reference key="4">
    <citation type="journal article" date="2004" name="Nature">
        <title>DNA sequence and analysis of human chromosome 9.</title>
        <authorList>
            <person name="Humphray S.J."/>
            <person name="Oliver K."/>
            <person name="Hunt A.R."/>
            <person name="Plumb R.W."/>
            <person name="Loveland J.E."/>
            <person name="Howe K.L."/>
            <person name="Andrews T.D."/>
            <person name="Searle S."/>
            <person name="Hunt S.E."/>
            <person name="Scott C.E."/>
            <person name="Jones M.C."/>
            <person name="Ainscough R."/>
            <person name="Almeida J.P."/>
            <person name="Ambrose K.D."/>
            <person name="Ashwell R.I.S."/>
            <person name="Babbage A.K."/>
            <person name="Babbage S."/>
            <person name="Bagguley C.L."/>
            <person name="Bailey J."/>
            <person name="Banerjee R."/>
            <person name="Barker D.J."/>
            <person name="Barlow K.F."/>
            <person name="Bates K."/>
            <person name="Beasley H."/>
            <person name="Beasley O."/>
            <person name="Bird C.P."/>
            <person name="Bray-Allen S."/>
            <person name="Brown A.J."/>
            <person name="Brown J.Y."/>
            <person name="Burford D."/>
            <person name="Burrill W."/>
            <person name="Burton J."/>
            <person name="Carder C."/>
            <person name="Carter N.P."/>
            <person name="Chapman J.C."/>
            <person name="Chen Y."/>
            <person name="Clarke G."/>
            <person name="Clark S.Y."/>
            <person name="Clee C.M."/>
            <person name="Clegg S."/>
            <person name="Collier R.E."/>
            <person name="Corby N."/>
            <person name="Crosier M."/>
            <person name="Cummings A.T."/>
            <person name="Davies J."/>
            <person name="Dhami P."/>
            <person name="Dunn M."/>
            <person name="Dutta I."/>
            <person name="Dyer L.W."/>
            <person name="Earthrowl M.E."/>
            <person name="Faulkner L."/>
            <person name="Fleming C.J."/>
            <person name="Frankish A."/>
            <person name="Frankland J.A."/>
            <person name="French L."/>
            <person name="Fricker D.G."/>
            <person name="Garner P."/>
            <person name="Garnett J."/>
            <person name="Ghori J."/>
            <person name="Gilbert J.G.R."/>
            <person name="Glison C."/>
            <person name="Grafham D.V."/>
            <person name="Gribble S."/>
            <person name="Griffiths C."/>
            <person name="Griffiths-Jones S."/>
            <person name="Grocock R."/>
            <person name="Guy J."/>
            <person name="Hall R.E."/>
            <person name="Hammond S."/>
            <person name="Harley J.L."/>
            <person name="Harrison E.S.I."/>
            <person name="Hart E.A."/>
            <person name="Heath P.D."/>
            <person name="Henderson C.D."/>
            <person name="Hopkins B.L."/>
            <person name="Howard P.J."/>
            <person name="Howden P.J."/>
            <person name="Huckle E."/>
            <person name="Johnson C."/>
            <person name="Johnson D."/>
            <person name="Joy A.A."/>
            <person name="Kay M."/>
            <person name="Keenan S."/>
            <person name="Kershaw J.K."/>
            <person name="Kimberley A.M."/>
            <person name="King A."/>
            <person name="Knights A."/>
            <person name="Laird G.K."/>
            <person name="Langford C."/>
            <person name="Lawlor S."/>
            <person name="Leongamornlert D.A."/>
            <person name="Leversha M."/>
            <person name="Lloyd C."/>
            <person name="Lloyd D.M."/>
            <person name="Lovell J."/>
            <person name="Martin S."/>
            <person name="Mashreghi-Mohammadi M."/>
            <person name="Matthews L."/>
            <person name="McLaren S."/>
            <person name="McLay K.E."/>
            <person name="McMurray A."/>
            <person name="Milne S."/>
            <person name="Nickerson T."/>
            <person name="Nisbett J."/>
            <person name="Nordsiek G."/>
            <person name="Pearce A.V."/>
            <person name="Peck A.I."/>
            <person name="Porter K.M."/>
            <person name="Pandian R."/>
            <person name="Pelan S."/>
            <person name="Phillimore B."/>
            <person name="Povey S."/>
            <person name="Ramsey Y."/>
            <person name="Rand V."/>
            <person name="Scharfe M."/>
            <person name="Sehra H.K."/>
            <person name="Shownkeen R."/>
            <person name="Sims S.K."/>
            <person name="Skuce C.D."/>
            <person name="Smith M."/>
            <person name="Steward C.A."/>
            <person name="Swarbreck D."/>
            <person name="Sycamore N."/>
            <person name="Tester J."/>
            <person name="Thorpe A."/>
            <person name="Tracey A."/>
            <person name="Tromans A."/>
            <person name="Thomas D.W."/>
            <person name="Wall M."/>
            <person name="Wallis J.M."/>
            <person name="West A.P."/>
            <person name="Whitehead S.L."/>
            <person name="Willey D.L."/>
            <person name="Williams S.A."/>
            <person name="Wilming L."/>
            <person name="Wray P.W."/>
            <person name="Young L."/>
            <person name="Ashurst J.L."/>
            <person name="Coulson A."/>
            <person name="Blocker H."/>
            <person name="Durbin R.M."/>
            <person name="Sulston J.E."/>
            <person name="Hubbard T."/>
            <person name="Jackson M.J."/>
            <person name="Bentley D.R."/>
            <person name="Beck S."/>
            <person name="Rogers J."/>
            <person name="Dunham I."/>
        </authorList>
    </citation>
    <scope>NUCLEOTIDE SEQUENCE [LARGE SCALE GENOMIC DNA]</scope>
</reference>
<reference key="5">
    <citation type="submission" date="2005-07" db="EMBL/GenBank/DDBJ databases">
        <authorList>
            <person name="Mural R.J."/>
            <person name="Istrail S."/>
            <person name="Sutton G.G."/>
            <person name="Florea L."/>
            <person name="Halpern A.L."/>
            <person name="Mobarry C.M."/>
            <person name="Lippert R."/>
            <person name="Walenz B."/>
            <person name="Shatkay H."/>
            <person name="Dew I."/>
            <person name="Miller J.R."/>
            <person name="Flanigan M.J."/>
            <person name="Edwards N.J."/>
            <person name="Bolanos R."/>
            <person name="Fasulo D."/>
            <person name="Halldorsson B.V."/>
            <person name="Hannenhalli S."/>
            <person name="Turner R."/>
            <person name="Yooseph S."/>
            <person name="Lu F."/>
            <person name="Nusskern D.R."/>
            <person name="Shue B.C."/>
            <person name="Zheng X.H."/>
            <person name="Zhong F."/>
            <person name="Delcher A.L."/>
            <person name="Huson D.H."/>
            <person name="Kravitz S.A."/>
            <person name="Mouchard L."/>
            <person name="Reinert K."/>
            <person name="Remington K.A."/>
            <person name="Clark A.G."/>
            <person name="Waterman M.S."/>
            <person name="Eichler E.E."/>
            <person name="Adams M.D."/>
            <person name="Hunkapiller M.W."/>
            <person name="Myers E.W."/>
            <person name="Venter J.C."/>
        </authorList>
    </citation>
    <scope>NUCLEOTIDE SEQUENCE [LARGE SCALE GENOMIC DNA]</scope>
</reference>
<reference key="6">
    <citation type="journal article" date="2004" name="Genome Res.">
        <title>The status, quality, and expansion of the NIH full-length cDNA project: the Mammalian Gene Collection (MGC).</title>
        <authorList>
            <consortium name="The MGC Project Team"/>
        </authorList>
    </citation>
    <scope>NUCLEOTIDE SEQUENCE [LARGE SCALE MRNA] (ISOFORM 3)</scope>
    <scope>NUCLEOTIDE SEQUENCE [LARGE SCALE MRNA] OF 42-1191 (ISOFORM 5)</scope>
    <source>
        <tissue>Brain</tissue>
        <tissue>Uterus</tissue>
    </source>
</reference>
<reference key="7">
    <citation type="journal article" date="2009" name="Sci. Signal.">
        <title>Quantitative phosphoproteomic analysis of T cell receptor signaling reveals system-wide modulation of protein-protein interactions.</title>
        <authorList>
            <person name="Mayya V."/>
            <person name="Lundgren D.H."/>
            <person name="Hwang S.-I."/>
            <person name="Rezaul K."/>
            <person name="Wu L."/>
            <person name="Eng J.K."/>
            <person name="Rodionov V."/>
            <person name="Han D.K."/>
        </authorList>
    </citation>
    <scope>PHOSPHORYLATION [LARGE SCALE ANALYSIS] AT SER-549</scope>
    <scope>IDENTIFICATION BY MASS SPECTROMETRY [LARGE SCALE ANALYSIS]</scope>
    <source>
        <tissue>Leukemic T-cell</tissue>
    </source>
</reference>
<reference key="8">
    <citation type="journal article" date="2010" name="FEBS J.">
        <title>The ROQUIN family of proteins localizes to stress granules via the ROQ domain and binds target mRNAs.</title>
        <authorList>
            <person name="Athanasopoulos V."/>
            <person name="Barker A."/>
            <person name="Yu D."/>
            <person name="Tan A.H."/>
            <person name="Srivastava M."/>
            <person name="Contreras N."/>
            <person name="Wang J."/>
            <person name="Lam K.P."/>
            <person name="Brown S.H."/>
            <person name="Goodnow C.C."/>
            <person name="Dixon N.E."/>
            <person name="Leedman P.J."/>
            <person name="Saint R."/>
            <person name="Vinuesa C.G."/>
        </authorList>
    </citation>
    <scope>SUBCELLULAR LOCATION</scope>
</reference>
<reference key="9">
    <citation type="journal article" date="2010" name="Sci. Signal.">
        <title>Quantitative phosphoproteomics reveals widespread full phosphorylation site occupancy during mitosis.</title>
        <authorList>
            <person name="Olsen J.V."/>
            <person name="Vermeulen M."/>
            <person name="Santamaria A."/>
            <person name="Kumar C."/>
            <person name="Miller M.L."/>
            <person name="Jensen L.J."/>
            <person name="Gnad F."/>
            <person name="Cox J."/>
            <person name="Jensen T.S."/>
            <person name="Nigg E.A."/>
            <person name="Brunak S."/>
            <person name="Mann M."/>
        </authorList>
    </citation>
    <scope>PHOSPHORYLATION [LARGE SCALE ANALYSIS] AT SER-808</scope>
    <scope>IDENTIFICATION BY MASS SPECTROMETRY [LARGE SCALE ANALYSIS]</scope>
    <source>
        <tissue>Cervix carcinoma</tissue>
    </source>
</reference>
<reference key="10">
    <citation type="journal article" date="2013" name="Immunol. Rev.">
        <title>Molecular control of Tfh-cell differentiation by Roquin family proteins.</title>
        <authorList>
            <person name="Heissmeyer V."/>
            <person name="Vogel K.U."/>
        </authorList>
    </citation>
    <scope>REVIEW</scope>
</reference>
<reference key="11">
    <citation type="journal article" date="2013" name="J. Proteome Res.">
        <title>Toward a comprehensive characterization of a human cancer cell phosphoproteome.</title>
        <authorList>
            <person name="Zhou H."/>
            <person name="Di Palma S."/>
            <person name="Preisinger C."/>
            <person name="Peng M."/>
            <person name="Polat A.N."/>
            <person name="Heck A.J."/>
            <person name="Mohammed S."/>
        </authorList>
    </citation>
    <scope>PHOSPHORYLATION [LARGE SCALE ANALYSIS] AT SER-983 AND SER-1119</scope>
    <scope>IDENTIFICATION BY MASS SPECTROMETRY [LARGE SCALE ANALYSIS]</scope>
    <source>
        <tissue>Cervix carcinoma</tissue>
        <tissue>Erythroleukemia</tissue>
    </source>
</reference>
<reference key="12">
    <citation type="journal article" date="2014" name="Sci. Signal.">
        <title>Roquin-2 promotes ubiquitin-mediated degradation of ASK1 to regulate stress responses.</title>
        <authorList>
            <person name="Maruyama T."/>
            <person name="Araki T."/>
            <person name="Kawarazaki Y."/>
            <person name="Naguro I."/>
            <person name="Heynen S."/>
            <person name="Aza-Blanc P."/>
            <person name="Ronai Z."/>
            <person name="Matsuzawa A."/>
            <person name="Ichijo H."/>
        </authorList>
    </citation>
    <scope>FUNCTION</scope>
    <scope>INTERACTION WITH MAP3K5</scope>
    <scope>MUTAGENESIS OF CYS-33</scope>
</reference>
<reference key="13">
    <citation type="journal article" date="2015" name="Nat. Commun.">
        <title>Roquin binds microRNA-146a and Argonaute2 to regulate microRNA homeostasis.</title>
        <authorList>
            <person name="Srivastava M."/>
            <person name="Duan G."/>
            <person name="Kershaw N.J."/>
            <person name="Athanasopoulos V."/>
            <person name="Yeo J.H."/>
            <person name="Ose T."/>
            <person name="Hu D."/>
            <person name="Brown S.H."/>
            <person name="Jergic S."/>
            <person name="Patel H.R."/>
            <person name="Pratama A."/>
            <person name="Richards S."/>
            <person name="Verma A."/>
            <person name="Jones E.Y."/>
            <person name="Heissmeyer V."/>
            <person name="Preiss T."/>
            <person name="Dixon N.E."/>
            <person name="Chong M.M."/>
            <person name="Babon J.J."/>
            <person name="Vinuesa C.G."/>
        </authorList>
    </citation>
    <scope>FUNCTION</scope>
</reference>
<reference key="14">
    <citation type="journal article" date="2017" name="Cell Rep.">
        <title>TRIM48 Promotes ASK1 Activation and Cell Death through Ubiquitination-Dependent Degradation of the ASK1-Negative Regulator PRMT1.</title>
        <authorList>
            <person name="Hirata Y."/>
            <person name="Katagiri K."/>
            <person name="Nagaoka K."/>
            <person name="Morishita T."/>
            <person name="Kudoh Y."/>
            <person name="Hatta T."/>
            <person name="Naguro I."/>
            <person name="Kano K."/>
            <person name="Udagawa T."/>
            <person name="Natsume T."/>
            <person name="Aoki J."/>
            <person name="Inada T."/>
            <person name="Noguchi T."/>
            <person name="Ichijo H."/>
            <person name="Matsuzawa A."/>
        </authorList>
    </citation>
    <scope>FUNCTION</scope>
</reference>
<reference evidence="20 21" key="15">
    <citation type="journal article" date="2015" name="Acta Crystallogr. F">
        <title>Structure of human Roquin-2 and its complex with constitutive-decay element RNA.</title>
        <authorList>
            <person name="Sakurai S."/>
            <person name="Ohto U."/>
            <person name="Shimizu T."/>
        </authorList>
    </citation>
    <scope>X-RAY CRYSTALLOGRAPHY (1.60 ANGSTROMS) OF 171-325 IN COMPLEX WITH RNA</scope>
    <scope>RNA-BINDING</scope>
</reference>
<reference evidence="18 19" key="16">
    <citation type="journal article" date="2015" name="Sci. Rep.">
        <title>New Insights into the RNA-Binding and E3 Ubiquitin Ligase Activities of Roquins.</title>
        <authorList>
            <person name="Zhang Q."/>
            <person name="Fan L."/>
            <person name="Hou F."/>
            <person name="Dong A."/>
            <person name="Wang Y.X."/>
            <person name="Tong Y."/>
        </authorList>
    </citation>
    <scope>X-RAY CRYSTALLOGRAPHY (2.50 ANGSTROMS) OF 87-404</scope>
    <scope>MUTAGENESIS OF 244-GLN--ARG-248 AND SER-323</scope>
    <scope>FUNCTION</scope>
    <scope>CATALYTIC ACTIVITY</scope>
    <scope>PATHWAY</scope>
    <scope>ACTIVITY REGULATION</scope>
    <scope>DOMAIN</scope>
</reference>
<organism>
    <name type="scientific">Homo sapiens</name>
    <name type="common">Human</name>
    <dbReference type="NCBI Taxonomy" id="9606"/>
    <lineage>
        <taxon>Eukaryota</taxon>
        <taxon>Metazoa</taxon>
        <taxon>Chordata</taxon>
        <taxon>Craniata</taxon>
        <taxon>Vertebrata</taxon>
        <taxon>Euteleostomi</taxon>
        <taxon>Mammalia</taxon>
        <taxon>Eutheria</taxon>
        <taxon>Euarchontoglires</taxon>
        <taxon>Primates</taxon>
        <taxon>Haplorrhini</taxon>
        <taxon>Catarrhini</taxon>
        <taxon>Hominidae</taxon>
        <taxon>Homo</taxon>
    </lineage>
</organism>
<sequence length="1191" mass="131669">MPVQAAQWTEFLSCPICYNEFDENVHKPISLGCSHTVCKTCLNKLHRKACPFDQTAINTDIDVLPVNFALLQLVGAQVPDHQSIKLSNLGENKHYEVAKKCVEDLALYLKPLSGGKGVASLNQSALSRPMQRKLVTLVNCQLVEEEGRVRAMRAARSLGERTVTELILQHQNPQQLSANLWAAVRARGCQFLGPAMQEEALKLVLLALEDGSALSRKVLVLFVVQRLEPRFPQASKTSIGHVVQLLYRASCFKVTKRDEDSSLMQLKEEFRSYEALRREHDAQIVHIAMEAGLRISPEQWSSLLYGDLAHKSHMQSIIDKLQSPESFAKSVQELTIVLQRTGDPANLNRLRPHLELLANIDPNPDAVSPTWEQLENAMVAVKTVVHGLVDFIQNYSRKGHETPQPQPNSKYKTSMCRDLRQQGGCPRGTNCTFAHSQEELEKYRLRNKKINATVRTFPLLNKVGVNNTVTTTAGNVISVIGSTETTGKIVPSTNGISNAENSVSQLISRSTDSTLRALETVKKVGKVGANGQNAAGPSADSVTENKIGSPPKTPVSNVAATSAGPSNVGTELNSVPQKSSPFLTRVPVYPPHSENIQYFQDPRTQIPFEVPQYPQTGYYPPPPTVPAGVAPCVPRFVRSNNVPESSLPPASMPYADHYSTFSPRDRMNSSPYQPPPPQPYGPVPPVPSGMYAPVYDSRRIWRPPMYQRDDIIRSNSLPPMDVMHSSVYQTSLRERYNSLDGYYSVACQPPSEPRTTVPLPREPCGHLKTSCEEQIRRKPDQWAQYHTQKAPLVSSTLPVATQSPTPPSPLFSVDFRADFSESVSGTKFEEDHLSHYSPWSCGTIGSCINAIDSEPKDVIANSNAVLMDLDSGDVKRRVHLFETQRRTKEEDPIIPFSDGPIISKWGAISRSSRTGYHTTDPVQATASQGSATKPISVSDYVPYVNAVDSRWSSYGNEATSSAHYVERDRFIVTDLSGHRKHSSTGDLLSLELQQAKSNSLLLQREANALAMQQKWNSLDEGRHLTLNLLSKEIELRNGELQSDYTEDATDTKPDRDIELELSALDTDEPDGQSEPIEEILDIQLGISSQNDQLLNGMAVENGHPVQQHQKEPPKQKKQSLGEDHVILEEQKTILPVTSCFSQPLPVSISNASCLPITTSVSAGNLILKTHVMSEDKNDFLKPVANGKMVNS</sequence>
<keyword id="KW-0002">3D-structure</keyword>
<keyword id="KW-0025">Alternative splicing</keyword>
<keyword id="KW-0963">Cytoplasm</keyword>
<keyword id="KW-0479">Metal-binding</keyword>
<keyword id="KW-0597">Phosphoprotein</keyword>
<keyword id="KW-1267">Proteomics identification</keyword>
<keyword id="KW-1185">Reference proteome</keyword>
<keyword id="KW-0678">Repressor</keyword>
<keyword id="KW-0694">RNA-binding</keyword>
<keyword id="KW-0808">Transferase</keyword>
<keyword id="KW-0833">Ubl conjugation pathway</keyword>
<keyword id="KW-0862">Zinc</keyword>
<keyword id="KW-0863">Zinc-finger</keyword>
<comment type="function">
    <text evidence="2 9 11 12">Post-transcriptional repressor of mRNAs containing a conserved stem loop motif, called constitutive decay element (CDE), which is often located in the 3'-UTR, as in HMGXB3, ICOS, IER3, NFKBID, NFKBIZ, PPP1R10, TNF and in many more mRNAs. Binds to CDE and promotes mRNA deadenylation and degradation. This process does not involve miRNAs. In follicular helper T (Tfh) cells, represses of ICOS and TNFRSF4 expression, thus preventing spontaneous Tfh cell differentiation, germinal center B-cell differentiation in the absence of immunization and autoimmunity. In resting or LPS-stimulated macrophages, controls inflammation by suppressing TNF expression. Also recognizes CDE in its own mRNA and in that of paralogous RC3H1, possibly leading to feedback loop regulation (By similarity). miRNA-binding protein that regulates microRNA homeostasis. Enhances DICER-mediated processing of pre-MIR146a but reduces mature MIR146a levels through an increase of 3' end uridylation. Both inhibits ICOS mRNA expression and they may act together to exert the suppression (PubMed:25697406). Acts as a ubiquitin E3 ligase. Pairs with E2 enzymes UBE2B, UBE2D2, UBE2E2, UBE2E3, UBE2G2, UBE2K and UBE2Q2 and produces polyubiquitin chains (PubMed:26489670). Shows the strongest activity when paired with UBE2N:UBE2V1 or UBE2N:UBE2V2 E2 complexes and generate both short and long polyubiquitin chains (PubMed:26489670). Involved in the ubiquitination of MAP3K5 (PubMed:24448648, PubMed:26489670, PubMed:29186683). Able to interact with double-stranded RNA (dsRNA) (PubMed:26489670).</text>
</comment>
<comment type="catalytic activity">
    <reaction evidence="11 16">
        <text>S-ubiquitinyl-[E2 ubiquitin-conjugating enzyme]-L-cysteine + [acceptor protein]-L-lysine = [E2 ubiquitin-conjugating enzyme]-L-cysteine + N(6)-ubiquitinyl-[acceptor protein]-L-lysine.</text>
        <dbReference type="EC" id="2.3.2.27"/>
    </reaction>
</comment>
<comment type="activity regulation">
    <text evidence="11">Binding to dsRNA, but not CDE RNA, crosstalks with the E3 ubiquitin ligase activity and may inhibit ubiquitination.</text>
</comment>
<comment type="pathway">
    <text evidence="9 11">Protein modification; protein ubiquitination.</text>
</comment>
<comment type="subunit">
    <text evidence="2 9">Interacts with EDC4. Interacts with CCR4-NOT deadenylase complex (By similarity). Interacts with MAP3K5; the interaction is probably stimulus-dependent (PubMed:24448648).</text>
</comment>
<comment type="subcellular location">
    <subcellularLocation>
        <location evidence="1">Cytoplasm</location>
        <location evidence="1">P-body</location>
    </subcellularLocation>
    <text evidence="8">During stress, such as that induced by arsenite, localizes to cytosolic stress granules. Localization to stress granules, but not to P-bodies, depends upon the RING-type zinc finger.</text>
</comment>
<comment type="alternative products">
    <event type="alternative splicing"/>
    <isoform>
        <id>Q9HBD1-1</id>
        <name>1</name>
        <sequence type="displayed"/>
    </isoform>
    <isoform>
        <id>Q9HBD1-2</id>
        <name>2</name>
        <sequence type="described" ref="VSP_015021 VSP_015022"/>
    </isoform>
    <isoform>
        <id>Q9HBD1-3</id>
        <name>3</name>
        <sequence type="described" ref="VSP_015020 VSP_015023"/>
    </isoform>
    <isoform>
        <id>Q9HBD1-4</id>
        <name>4</name>
        <sequence type="described" ref="VSP_015024"/>
    </isoform>
    <isoform>
        <id>Q9HBD1-5</id>
        <name>5</name>
        <sequence type="described" ref="VSP_015018 VSP_015019"/>
    </isoform>
    <isoform>
        <id>Q9HBD1-6</id>
        <name>6</name>
        <sequence type="described" ref="VSP_015017 VSP_015024"/>
    </isoform>
</comment>
<comment type="tissue specificity">
    <text evidence="7">Expressed in spleen, testis, ovary and small intestine.</text>
</comment>
<comment type="domain">
    <text evidence="3">The RING-type zinc finger is required for proper localization to stress granules, but not to P-bodies.</text>
</comment>
<comment type="domain">
    <text evidence="3 10">The ROQ region is required for CDE RNA-binding. Has 2 separate RNA-binding sites, one for CDE RNA and the other for dsRNA (PubMed:26249698). It may also be involved in localization to stress granules (By similarity).</text>
</comment>
<comment type="domain">
    <text evidence="11">HEPN (higher eukaryotes and prokaryotes nucleotide-binding) are observed in both N- and C-terminal sides of ROQ domain with 3D structure even if they are poredcted on the basis of sequence.</text>
</comment>
<comment type="PTM">
    <text evidence="2">Proteolytically cleaved after Arg-509 and Arg-585 by MALT1 in activated CD4(+) T cells; cleavage at Arg-509 and Arg-585 is critical for promoting RC3H1 degradation in response to T-cell receptor (TCR) stimulation, and hence is necessary for prolonging the stability of a set of mRNAs controlling Th17 cell differentiation.</text>
</comment>
<comment type="sequence caution" evidence="17">
    <conflict type="erroneous initiation">
        <sequence resource="EMBL-CDS" id="BAA91340"/>
    </conflict>
    <text>Truncated N-terminus.</text>
</comment>
<comment type="sequence caution" evidence="17">
    <conflict type="erroneous initiation">
        <sequence resource="EMBL-CDS" id="BAB15634"/>
    </conflict>
    <text>Truncated N-terminus.</text>
</comment>